<sequence length="356" mass="40134">MTRMDHRSIISDTTQYFESNEPLQLELGGELPGVRVAYRTWGTLNAEKSNVILVCHALTGNADADSWWCGMFGEGRAFDETRDFIVCSNVLGSCYGTTGPMSVNPLSGRHYGPDFPRITIRDMVNVQRLLLRSLGIDRIRLIVGASLGGMQVLEWGAMYPEMAGALMPMGVSGRHSAWCIAQSEAQRQAIAADAEWQDGWYDPEVQPRKGLAAARMMAMCTYRCFENYQQRFGRKQREDGLFEAESYVRHQGDKLVGRFDANTYITLTRAMDMHDLGRGRDSYEAALGALKMPVEILSIDSDVLYPRQEQEELARLIPGSRLLFLDEPYGHDAFLIDTETVSRMVCEFKRQLIVDN</sequence>
<comment type="function">
    <text evidence="1">Transfers an acetyl group from acetyl-CoA to L-homoserine, forming acetyl-L-homoserine.</text>
</comment>
<comment type="catalytic activity">
    <reaction evidence="1">
        <text>L-homoserine + acetyl-CoA = O-acetyl-L-homoserine + CoA</text>
        <dbReference type="Rhea" id="RHEA:13701"/>
        <dbReference type="ChEBI" id="CHEBI:57287"/>
        <dbReference type="ChEBI" id="CHEBI:57288"/>
        <dbReference type="ChEBI" id="CHEBI:57476"/>
        <dbReference type="ChEBI" id="CHEBI:57716"/>
        <dbReference type="EC" id="2.3.1.31"/>
    </reaction>
</comment>
<comment type="pathway">
    <text evidence="1">Amino-acid biosynthesis; L-methionine biosynthesis via de novo pathway; O-acetyl-L-homoserine from L-homoserine: step 1/1.</text>
</comment>
<comment type="subunit">
    <text evidence="1">Homodimer.</text>
</comment>
<comment type="subcellular location">
    <subcellularLocation>
        <location evidence="1">Cytoplasm</location>
    </subcellularLocation>
</comment>
<comment type="similarity">
    <text evidence="1">Belongs to the AB hydrolase superfamily. MetX family.</text>
</comment>
<dbReference type="EC" id="2.3.1.31" evidence="1"/>
<dbReference type="EMBL" id="AE006470">
    <property type="protein sequence ID" value="AAM71847.1"/>
    <property type="molecule type" value="Genomic_DNA"/>
</dbReference>
<dbReference type="RefSeq" id="NP_661505.1">
    <property type="nucleotide sequence ID" value="NC_002932.3"/>
</dbReference>
<dbReference type="RefSeq" id="WP_010932292.1">
    <property type="nucleotide sequence ID" value="NC_002932.3"/>
</dbReference>
<dbReference type="SMR" id="Q8KES7"/>
<dbReference type="STRING" id="194439.CT0605"/>
<dbReference type="ESTHER" id="chlte-MET2">
    <property type="family name" value="Homoserine_transacetylase"/>
</dbReference>
<dbReference type="EnsemblBacteria" id="AAM71847">
    <property type="protein sequence ID" value="AAM71847"/>
    <property type="gene ID" value="CT0605"/>
</dbReference>
<dbReference type="KEGG" id="cte:CT0605"/>
<dbReference type="PATRIC" id="fig|194439.7.peg.563"/>
<dbReference type="eggNOG" id="COG2021">
    <property type="taxonomic scope" value="Bacteria"/>
</dbReference>
<dbReference type="HOGENOM" id="CLU_028760_1_2_10"/>
<dbReference type="OrthoDB" id="9800754at2"/>
<dbReference type="UniPathway" id="UPA00051">
    <property type="reaction ID" value="UER00074"/>
</dbReference>
<dbReference type="Proteomes" id="UP000001007">
    <property type="component" value="Chromosome"/>
</dbReference>
<dbReference type="GO" id="GO:0005737">
    <property type="term" value="C:cytoplasm"/>
    <property type="evidence" value="ECO:0007669"/>
    <property type="project" value="UniProtKB-SubCell"/>
</dbReference>
<dbReference type="GO" id="GO:0004414">
    <property type="term" value="F:homoserine O-acetyltransferase activity"/>
    <property type="evidence" value="ECO:0007669"/>
    <property type="project" value="UniProtKB-UniRule"/>
</dbReference>
<dbReference type="GO" id="GO:0009092">
    <property type="term" value="P:homoserine metabolic process"/>
    <property type="evidence" value="ECO:0007669"/>
    <property type="project" value="TreeGrafter"/>
</dbReference>
<dbReference type="GO" id="GO:0009086">
    <property type="term" value="P:methionine biosynthetic process"/>
    <property type="evidence" value="ECO:0007669"/>
    <property type="project" value="UniProtKB-UniRule"/>
</dbReference>
<dbReference type="Gene3D" id="3.40.50.1820">
    <property type="entry name" value="alpha/beta hydrolase"/>
    <property type="match status" value="1"/>
</dbReference>
<dbReference type="HAMAP" id="MF_00296">
    <property type="entry name" value="MetX_acyltransf"/>
    <property type="match status" value="1"/>
</dbReference>
<dbReference type="InterPro" id="IPR000073">
    <property type="entry name" value="AB_hydrolase_1"/>
</dbReference>
<dbReference type="InterPro" id="IPR029058">
    <property type="entry name" value="AB_hydrolase_fold"/>
</dbReference>
<dbReference type="InterPro" id="IPR008220">
    <property type="entry name" value="HAT_MetX-like"/>
</dbReference>
<dbReference type="NCBIfam" id="TIGR01392">
    <property type="entry name" value="homoserO_Ac_trn"/>
    <property type="match status" value="1"/>
</dbReference>
<dbReference type="NCBIfam" id="NF001209">
    <property type="entry name" value="PRK00175.1"/>
    <property type="match status" value="1"/>
</dbReference>
<dbReference type="PANTHER" id="PTHR32268">
    <property type="entry name" value="HOMOSERINE O-ACETYLTRANSFERASE"/>
    <property type="match status" value="1"/>
</dbReference>
<dbReference type="PANTHER" id="PTHR32268:SF11">
    <property type="entry name" value="HOMOSERINE O-ACETYLTRANSFERASE"/>
    <property type="match status" value="1"/>
</dbReference>
<dbReference type="Pfam" id="PF00561">
    <property type="entry name" value="Abhydrolase_1"/>
    <property type="match status" value="1"/>
</dbReference>
<dbReference type="PIRSF" id="PIRSF000443">
    <property type="entry name" value="Homoser_Ac_trans"/>
    <property type="match status" value="1"/>
</dbReference>
<dbReference type="SUPFAM" id="SSF53474">
    <property type="entry name" value="alpha/beta-Hydrolases"/>
    <property type="match status" value="1"/>
</dbReference>
<keyword id="KW-0012">Acyltransferase</keyword>
<keyword id="KW-0028">Amino-acid biosynthesis</keyword>
<keyword id="KW-0963">Cytoplasm</keyword>
<keyword id="KW-0486">Methionine biosynthesis</keyword>
<keyword id="KW-1185">Reference proteome</keyword>
<keyword id="KW-0808">Transferase</keyword>
<organism>
    <name type="scientific">Chlorobaculum tepidum (strain ATCC 49652 / DSM 12025 / NBRC 103806 / TLS)</name>
    <name type="common">Chlorobium tepidum</name>
    <dbReference type="NCBI Taxonomy" id="194439"/>
    <lineage>
        <taxon>Bacteria</taxon>
        <taxon>Pseudomonadati</taxon>
        <taxon>Chlorobiota</taxon>
        <taxon>Chlorobiia</taxon>
        <taxon>Chlorobiales</taxon>
        <taxon>Chlorobiaceae</taxon>
        <taxon>Chlorobaculum</taxon>
    </lineage>
</organism>
<reference key="1">
    <citation type="journal article" date="2002" name="Proc. Natl. Acad. Sci. U.S.A.">
        <title>The complete genome sequence of Chlorobium tepidum TLS, a photosynthetic, anaerobic, green-sulfur bacterium.</title>
        <authorList>
            <person name="Eisen J.A."/>
            <person name="Nelson K.E."/>
            <person name="Paulsen I.T."/>
            <person name="Heidelberg J.F."/>
            <person name="Wu M."/>
            <person name="Dodson R.J."/>
            <person name="DeBoy R.T."/>
            <person name="Gwinn M.L."/>
            <person name="Nelson W.C."/>
            <person name="Haft D.H."/>
            <person name="Hickey E.K."/>
            <person name="Peterson J.D."/>
            <person name="Durkin A.S."/>
            <person name="Kolonay J.F."/>
            <person name="Yang F."/>
            <person name="Holt I.E."/>
            <person name="Umayam L.A."/>
            <person name="Mason T.M."/>
            <person name="Brenner M."/>
            <person name="Shea T.P."/>
            <person name="Parksey D.S."/>
            <person name="Nierman W.C."/>
            <person name="Feldblyum T.V."/>
            <person name="Hansen C.L."/>
            <person name="Craven M.B."/>
            <person name="Radune D."/>
            <person name="Vamathevan J.J."/>
            <person name="Khouri H.M."/>
            <person name="White O."/>
            <person name="Gruber T.M."/>
            <person name="Ketchum K.A."/>
            <person name="Venter J.C."/>
            <person name="Tettelin H."/>
            <person name="Bryant D.A."/>
            <person name="Fraser C.M."/>
        </authorList>
    </citation>
    <scope>NUCLEOTIDE SEQUENCE [LARGE SCALE GENOMIC DNA]</scope>
    <source>
        <strain>ATCC 49652 / DSM 12025 / NBRC 103806 / TLS</strain>
    </source>
</reference>
<name>METXA_CHLTE</name>
<feature type="chain" id="PRO_0000155711" description="Homoserine O-acetyltransferase">
    <location>
        <begin position="1"/>
        <end position="356"/>
    </location>
</feature>
<feature type="domain" description="AB hydrolase-1" evidence="1">
    <location>
        <begin position="50"/>
        <end position="335"/>
    </location>
</feature>
<feature type="active site" description="Nucleophile" evidence="1">
    <location>
        <position position="146"/>
    </location>
</feature>
<feature type="active site" evidence="1">
    <location>
        <position position="302"/>
    </location>
</feature>
<feature type="active site" evidence="1">
    <location>
        <position position="331"/>
    </location>
</feature>
<feature type="binding site" evidence="1">
    <location>
        <position position="215"/>
    </location>
    <ligand>
        <name>substrate</name>
    </ligand>
</feature>
<feature type="binding site" evidence="1">
    <location>
        <position position="332"/>
    </location>
    <ligand>
        <name>substrate</name>
    </ligand>
</feature>
<accession>Q8KES7</accession>
<gene>
    <name evidence="1" type="primary">metXA</name>
    <name type="ordered locus">CT0605</name>
</gene>
<proteinExistence type="inferred from homology"/>
<protein>
    <recommendedName>
        <fullName evidence="1">Homoserine O-acetyltransferase</fullName>
        <shortName evidence="1">HAT</shortName>
        <ecNumber evidence="1">2.3.1.31</ecNumber>
    </recommendedName>
    <alternativeName>
        <fullName evidence="1">Homoserine transacetylase</fullName>
        <shortName evidence="1">HTA</shortName>
    </alternativeName>
</protein>
<evidence type="ECO:0000255" key="1">
    <source>
        <dbReference type="HAMAP-Rule" id="MF_00296"/>
    </source>
</evidence>